<dbReference type="EC" id="6.1.1.1" evidence="1"/>
<dbReference type="EMBL" id="CP000661">
    <property type="protein sequence ID" value="ABP69829.1"/>
    <property type="molecule type" value="Genomic_DNA"/>
</dbReference>
<dbReference type="SMR" id="A4WR15"/>
<dbReference type="STRING" id="349102.Rsph17025_0927"/>
<dbReference type="KEGG" id="rsq:Rsph17025_0927"/>
<dbReference type="eggNOG" id="COG0162">
    <property type="taxonomic scope" value="Bacteria"/>
</dbReference>
<dbReference type="HOGENOM" id="CLU_024003_0_3_5"/>
<dbReference type="BioCyc" id="RSPH349102:G1G8M-951-MONOMER"/>
<dbReference type="GO" id="GO:0005829">
    <property type="term" value="C:cytosol"/>
    <property type="evidence" value="ECO:0007669"/>
    <property type="project" value="TreeGrafter"/>
</dbReference>
<dbReference type="GO" id="GO:0005524">
    <property type="term" value="F:ATP binding"/>
    <property type="evidence" value="ECO:0007669"/>
    <property type="project" value="UniProtKB-UniRule"/>
</dbReference>
<dbReference type="GO" id="GO:0003723">
    <property type="term" value="F:RNA binding"/>
    <property type="evidence" value="ECO:0007669"/>
    <property type="project" value="UniProtKB-KW"/>
</dbReference>
<dbReference type="GO" id="GO:0004831">
    <property type="term" value="F:tyrosine-tRNA ligase activity"/>
    <property type="evidence" value="ECO:0007669"/>
    <property type="project" value="UniProtKB-UniRule"/>
</dbReference>
<dbReference type="GO" id="GO:0006437">
    <property type="term" value="P:tyrosyl-tRNA aminoacylation"/>
    <property type="evidence" value="ECO:0007669"/>
    <property type="project" value="UniProtKB-UniRule"/>
</dbReference>
<dbReference type="CDD" id="cd00805">
    <property type="entry name" value="TyrRS_core"/>
    <property type="match status" value="1"/>
</dbReference>
<dbReference type="FunFam" id="1.10.240.10:FF:000001">
    <property type="entry name" value="Tyrosine--tRNA ligase"/>
    <property type="match status" value="1"/>
</dbReference>
<dbReference type="FunFam" id="3.40.50.620:FF:000008">
    <property type="entry name" value="Tyrosine--tRNA ligase"/>
    <property type="match status" value="1"/>
</dbReference>
<dbReference type="Gene3D" id="3.40.50.620">
    <property type="entry name" value="HUPs"/>
    <property type="match status" value="1"/>
</dbReference>
<dbReference type="Gene3D" id="3.10.290.10">
    <property type="entry name" value="RNA-binding S4 domain"/>
    <property type="match status" value="1"/>
</dbReference>
<dbReference type="Gene3D" id="1.10.240.10">
    <property type="entry name" value="Tyrosyl-Transfer RNA Synthetase"/>
    <property type="match status" value="1"/>
</dbReference>
<dbReference type="HAMAP" id="MF_02006">
    <property type="entry name" value="Tyr_tRNA_synth_type1"/>
    <property type="match status" value="1"/>
</dbReference>
<dbReference type="InterPro" id="IPR002305">
    <property type="entry name" value="aa-tRNA-synth_Ic"/>
</dbReference>
<dbReference type="InterPro" id="IPR014729">
    <property type="entry name" value="Rossmann-like_a/b/a_fold"/>
</dbReference>
<dbReference type="InterPro" id="IPR036986">
    <property type="entry name" value="S4_RNA-bd_sf"/>
</dbReference>
<dbReference type="InterPro" id="IPR002307">
    <property type="entry name" value="Tyr-tRNA-ligase"/>
</dbReference>
<dbReference type="InterPro" id="IPR024088">
    <property type="entry name" value="Tyr-tRNA-ligase_bac-type"/>
</dbReference>
<dbReference type="InterPro" id="IPR024107">
    <property type="entry name" value="Tyr-tRNA-ligase_bac_1"/>
</dbReference>
<dbReference type="NCBIfam" id="TIGR00234">
    <property type="entry name" value="tyrS"/>
    <property type="match status" value="1"/>
</dbReference>
<dbReference type="PANTHER" id="PTHR11766:SF0">
    <property type="entry name" value="TYROSINE--TRNA LIGASE, MITOCHONDRIAL"/>
    <property type="match status" value="1"/>
</dbReference>
<dbReference type="PANTHER" id="PTHR11766">
    <property type="entry name" value="TYROSYL-TRNA SYNTHETASE"/>
    <property type="match status" value="1"/>
</dbReference>
<dbReference type="Pfam" id="PF00579">
    <property type="entry name" value="tRNA-synt_1b"/>
    <property type="match status" value="1"/>
</dbReference>
<dbReference type="PRINTS" id="PR01040">
    <property type="entry name" value="TRNASYNTHTYR"/>
</dbReference>
<dbReference type="SUPFAM" id="SSF55174">
    <property type="entry name" value="Alpha-L RNA-binding motif"/>
    <property type="match status" value="1"/>
</dbReference>
<dbReference type="SUPFAM" id="SSF52374">
    <property type="entry name" value="Nucleotidylyl transferase"/>
    <property type="match status" value="1"/>
</dbReference>
<dbReference type="PROSITE" id="PS50889">
    <property type="entry name" value="S4"/>
    <property type="match status" value="1"/>
</dbReference>
<feature type="chain" id="PRO_1000088612" description="Tyrosine--tRNA ligase">
    <location>
        <begin position="1"/>
        <end position="416"/>
    </location>
</feature>
<feature type="domain" description="S4 RNA-binding" evidence="1">
    <location>
        <begin position="351"/>
        <end position="416"/>
    </location>
</feature>
<feature type="short sequence motif" description="'HIGH' region">
    <location>
        <begin position="45"/>
        <end position="54"/>
    </location>
</feature>
<feature type="short sequence motif" description="'KMSKS' region">
    <location>
        <begin position="237"/>
        <end position="241"/>
    </location>
</feature>
<feature type="binding site" evidence="1">
    <location>
        <position position="40"/>
    </location>
    <ligand>
        <name>L-tyrosine</name>
        <dbReference type="ChEBI" id="CHEBI:58315"/>
    </ligand>
</feature>
<feature type="binding site" evidence="1">
    <location>
        <position position="177"/>
    </location>
    <ligand>
        <name>L-tyrosine</name>
        <dbReference type="ChEBI" id="CHEBI:58315"/>
    </ligand>
</feature>
<feature type="binding site" evidence="1">
    <location>
        <position position="181"/>
    </location>
    <ligand>
        <name>L-tyrosine</name>
        <dbReference type="ChEBI" id="CHEBI:58315"/>
    </ligand>
</feature>
<feature type="binding site" evidence="1">
    <location>
        <position position="240"/>
    </location>
    <ligand>
        <name>ATP</name>
        <dbReference type="ChEBI" id="CHEBI:30616"/>
    </ligand>
</feature>
<gene>
    <name evidence="1" type="primary">tyrS</name>
    <name type="ordered locus">Rsph17025_0927</name>
</gene>
<proteinExistence type="inferred from homology"/>
<protein>
    <recommendedName>
        <fullName evidence="1">Tyrosine--tRNA ligase</fullName>
        <ecNumber evidence="1">6.1.1.1</ecNumber>
    </recommendedName>
    <alternativeName>
        <fullName evidence="1">Tyrosyl-tRNA synthetase</fullName>
        <shortName evidence="1">TyrRS</shortName>
    </alternativeName>
</protein>
<comment type="function">
    <text evidence="1">Catalyzes the attachment of tyrosine to tRNA(Tyr) in a two-step reaction: tyrosine is first activated by ATP to form Tyr-AMP and then transferred to the acceptor end of tRNA(Tyr).</text>
</comment>
<comment type="catalytic activity">
    <reaction evidence="1">
        <text>tRNA(Tyr) + L-tyrosine + ATP = L-tyrosyl-tRNA(Tyr) + AMP + diphosphate + H(+)</text>
        <dbReference type="Rhea" id="RHEA:10220"/>
        <dbReference type="Rhea" id="RHEA-COMP:9706"/>
        <dbReference type="Rhea" id="RHEA-COMP:9707"/>
        <dbReference type="ChEBI" id="CHEBI:15378"/>
        <dbReference type="ChEBI" id="CHEBI:30616"/>
        <dbReference type="ChEBI" id="CHEBI:33019"/>
        <dbReference type="ChEBI" id="CHEBI:58315"/>
        <dbReference type="ChEBI" id="CHEBI:78442"/>
        <dbReference type="ChEBI" id="CHEBI:78536"/>
        <dbReference type="ChEBI" id="CHEBI:456215"/>
        <dbReference type="EC" id="6.1.1.1"/>
    </reaction>
</comment>
<comment type="subunit">
    <text evidence="1">Homodimer.</text>
</comment>
<comment type="subcellular location">
    <subcellularLocation>
        <location evidence="1">Cytoplasm</location>
    </subcellularLocation>
</comment>
<comment type="similarity">
    <text evidence="1">Belongs to the class-I aminoacyl-tRNA synthetase family. TyrS type 1 subfamily.</text>
</comment>
<organism>
    <name type="scientific">Cereibacter sphaeroides (strain ATCC 17025 / ATH 2.4.3)</name>
    <name type="common">Rhodobacter sphaeroides</name>
    <dbReference type="NCBI Taxonomy" id="349102"/>
    <lineage>
        <taxon>Bacteria</taxon>
        <taxon>Pseudomonadati</taxon>
        <taxon>Pseudomonadota</taxon>
        <taxon>Alphaproteobacteria</taxon>
        <taxon>Rhodobacterales</taxon>
        <taxon>Paracoccaceae</taxon>
        <taxon>Cereibacter</taxon>
    </lineage>
</organism>
<reference key="1">
    <citation type="submission" date="2007-04" db="EMBL/GenBank/DDBJ databases">
        <title>Complete sequence of chromosome of Rhodobacter sphaeroides ATCC 17025.</title>
        <authorList>
            <consortium name="US DOE Joint Genome Institute"/>
            <person name="Copeland A."/>
            <person name="Lucas S."/>
            <person name="Lapidus A."/>
            <person name="Barry K."/>
            <person name="Detter J.C."/>
            <person name="Glavina del Rio T."/>
            <person name="Hammon N."/>
            <person name="Israni S."/>
            <person name="Dalin E."/>
            <person name="Tice H."/>
            <person name="Pitluck S."/>
            <person name="Chertkov O."/>
            <person name="Brettin T."/>
            <person name="Bruce D."/>
            <person name="Han C."/>
            <person name="Schmutz J."/>
            <person name="Larimer F."/>
            <person name="Land M."/>
            <person name="Hauser L."/>
            <person name="Kyrpides N."/>
            <person name="Kim E."/>
            <person name="Richardson P."/>
            <person name="Mackenzie C."/>
            <person name="Choudhary M."/>
            <person name="Donohue T.J."/>
            <person name="Kaplan S."/>
        </authorList>
    </citation>
    <scope>NUCLEOTIDE SEQUENCE [LARGE SCALE GENOMIC DNA]</scope>
    <source>
        <strain>ATCC 17025 / ATH 2.4.3</strain>
    </source>
</reference>
<sequence length="416" mass="45826">MTYHPKSDFLRVMQERGYLADCTDMQALDEAMSKGVVPAYIGYDATAASLHVGHLLNIMMLRWLQKTGHKPITLMGGGTTKVGDPSFRSEERPLLTPEKIDANIAGMKQVFARYLDYSDGATGALMLNNAEWLDSLNYLDFLRDIGRHFSVNRMLSFESVKSRLDREQSLSFLEFNYMILQAYDFLELFRRYGCRLQMGGSDQWGNIVNGIDLTRRVLEGEIFGLTSPLLTTSDGRKMGKSAGGAVWLSGEMLAPYDFWQFWRNTTDADVGRFLKLYTELPVEECDRLGALQGAEINGAKIRLANEVTTLLHGREAAEAAEATARAVFEQGGVGGALEVVEIAPATLGEGLSVTHFLVAAGLVTSGKEAKRLVAENGLRFNNEPVSDANAPVTAAMIGDELKVSIGRKKHKLVRLA</sequence>
<evidence type="ECO:0000255" key="1">
    <source>
        <dbReference type="HAMAP-Rule" id="MF_02006"/>
    </source>
</evidence>
<keyword id="KW-0030">Aminoacyl-tRNA synthetase</keyword>
<keyword id="KW-0067">ATP-binding</keyword>
<keyword id="KW-0963">Cytoplasm</keyword>
<keyword id="KW-0436">Ligase</keyword>
<keyword id="KW-0547">Nucleotide-binding</keyword>
<keyword id="KW-0648">Protein biosynthesis</keyword>
<keyword id="KW-0694">RNA-binding</keyword>
<accession>A4WR15</accession>
<name>SYY_CERS5</name>